<evidence type="ECO:0000255" key="1">
    <source>
        <dbReference type="HAMAP-Rule" id="MF_00003"/>
    </source>
</evidence>
<gene>
    <name evidence="1" type="primary">rbfA</name>
    <name type="ordered locus">EFER_3146</name>
</gene>
<comment type="function">
    <text evidence="1">One of several proteins that assist in the late maturation steps of the functional core of the 30S ribosomal subunit. Associates with free 30S ribosomal subunits (but not with 30S subunits that are part of 70S ribosomes or polysomes). Required for efficient processing of 16S rRNA. May interact with the 5'-terminal helix region of 16S rRNA.</text>
</comment>
<comment type="subunit">
    <text evidence="1">Monomer. Binds 30S ribosomal subunits, but not 50S ribosomal subunits or 70S ribosomes.</text>
</comment>
<comment type="subcellular location">
    <subcellularLocation>
        <location evidence="1">Cytoplasm</location>
    </subcellularLocation>
</comment>
<comment type="similarity">
    <text evidence="1">Belongs to the RbfA family.</text>
</comment>
<accession>B7LR36</accession>
<dbReference type="EMBL" id="CU928158">
    <property type="protein sequence ID" value="CAQ90639.1"/>
    <property type="molecule type" value="Genomic_DNA"/>
</dbReference>
<dbReference type="RefSeq" id="WP_001040205.1">
    <property type="nucleotide sequence ID" value="NC_011740.1"/>
</dbReference>
<dbReference type="SMR" id="B7LR36"/>
<dbReference type="GeneID" id="93778816"/>
<dbReference type="KEGG" id="efe:EFER_3146"/>
<dbReference type="HOGENOM" id="CLU_089475_5_0_6"/>
<dbReference type="OrthoDB" id="307788at2"/>
<dbReference type="Proteomes" id="UP000000745">
    <property type="component" value="Chromosome"/>
</dbReference>
<dbReference type="GO" id="GO:0005829">
    <property type="term" value="C:cytosol"/>
    <property type="evidence" value="ECO:0007669"/>
    <property type="project" value="TreeGrafter"/>
</dbReference>
<dbReference type="GO" id="GO:0043024">
    <property type="term" value="F:ribosomal small subunit binding"/>
    <property type="evidence" value="ECO:0007669"/>
    <property type="project" value="TreeGrafter"/>
</dbReference>
<dbReference type="GO" id="GO:0030490">
    <property type="term" value="P:maturation of SSU-rRNA"/>
    <property type="evidence" value="ECO:0007669"/>
    <property type="project" value="UniProtKB-UniRule"/>
</dbReference>
<dbReference type="FunFam" id="3.30.300.20:FF:000007">
    <property type="entry name" value="Ribosome-binding factor A"/>
    <property type="match status" value="1"/>
</dbReference>
<dbReference type="Gene3D" id="3.30.300.20">
    <property type="match status" value="1"/>
</dbReference>
<dbReference type="HAMAP" id="MF_00003">
    <property type="entry name" value="RbfA"/>
    <property type="match status" value="1"/>
</dbReference>
<dbReference type="InterPro" id="IPR015946">
    <property type="entry name" value="KH_dom-like_a/b"/>
</dbReference>
<dbReference type="InterPro" id="IPR000238">
    <property type="entry name" value="RbfA"/>
</dbReference>
<dbReference type="InterPro" id="IPR023799">
    <property type="entry name" value="RbfA_dom_sf"/>
</dbReference>
<dbReference type="InterPro" id="IPR020053">
    <property type="entry name" value="Ribosome-bd_factorA_CS"/>
</dbReference>
<dbReference type="NCBIfam" id="TIGR00082">
    <property type="entry name" value="rbfA"/>
    <property type="match status" value="1"/>
</dbReference>
<dbReference type="PANTHER" id="PTHR33515">
    <property type="entry name" value="RIBOSOME-BINDING FACTOR A, CHLOROPLASTIC-RELATED"/>
    <property type="match status" value="1"/>
</dbReference>
<dbReference type="PANTHER" id="PTHR33515:SF1">
    <property type="entry name" value="RIBOSOME-BINDING FACTOR A, CHLOROPLASTIC-RELATED"/>
    <property type="match status" value="1"/>
</dbReference>
<dbReference type="Pfam" id="PF02033">
    <property type="entry name" value="RBFA"/>
    <property type="match status" value="1"/>
</dbReference>
<dbReference type="SUPFAM" id="SSF89919">
    <property type="entry name" value="Ribosome-binding factor A, RbfA"/>
    <property type="match status" value="1"/>
</dbReference>
<dbReference type="PROSITE" id="PS01319">
    <property type="entry name" value="RBFA"/>
    <property type="match status" value="1"/>
</dbReference>
<proteinExistence type="inferred from homology"/>
<feature type="chain" id="PRO_1000193260" description="Ribosome-binding factor A">
    <location>
        <begin position="1"/>
        <end position="133"/>
    </location>
</feature>
<protein>
    <recommendedName>
        <fullName evidence="1">Ribosome-binding factor A</fullName>
    </recommendedName>
</protein>
<name>RBFA_ESCF3</name>
<reference key="1">
    <citation type="journal article" date="2009" name="PLoS Genet.">
        <title>Organised genome dynamics in the Escherichia coli species results in highly diverse adaptive paths.</title>
        <authorList>
            <person name="Touchon M."/>
            <person name="Hoede C."/>
            <person name="Tenaillon O."/>
            <person name="Barbe V."/>
            <person name="Baeriswyl S."/>
            <person name="Bidet P."/>
            <person name="Bingen E."/>
            <person name="Bonacorsi S."/>
            <person name="Bouchier C."/>
            <person name="Bouvet O."/>
            <person name="Calteau A."/>
            <person name="Chiapello H."/>
            <person name="Clermont O."/>
            <person name="Cruveiller S."/>
            <person name="Danchin A."/>
            <person name="Diard M."/>
            <person name="Dossat C."/>
            <person name="Karoui M.E."/>
            <person name="Frapy E."/>
            <person name="Garry L."/>
            <person name="Ghigo J.M."/>
            <person name="Gilles A.M."/>
            <person name="Johnson J."/>
            <person name="Le Bouguenec C."/>
            <person name="Lescat M."/>
            <person name="Mangenot S."/>
            <person name="Martinez-Jehanne V."/>
            <person name="Matic I."/>
            <person name="Nassif X."/>
            <person name="Oztas S."/>
            <person name="Petit M.A."/>
            <person name="Pichon C."/>
            <person name="Rouy Z."/>
            <person name="Ruf C.S."/>
            <person name="Schneider D."/>
            <person name="Tourret J."/>
            <person name="Vacherie B."/>
            <person name="Vallenet D."/>
            <person name="Medigue C."/>
            <person name="Rocha E.P.C."/>
            <person name="Denamur E."/>
        </authorList>
    </citation>
    <scope>NUCLEOTIDE SEQUENCE [LARGE SCALE GENOMIC DNA]</scope>
    <source>
        <strain>ATCC 35469 / DSM 13698 / BCRC 15582 / CCUG 18766 / IAM 14443 / JCM 21226 / LMG 7866 / NBRC 102419 / NCTC 12128 / CDC 0568-73</strain>
    </source>
</reference>
<organism>
    <name type="scientific">Escherichia fergusonii (strain ATCC 35469 / DSM 13698 / CCUG 18766 / IAM 14443 / JCM 21226 / LMG 7866 / NBRC 102419 / NCTC 12128 / CDC 0568-73)</name>
    <dbReference type="NCBI Taxonomy" id="585054"/>
    <lineage>
        <taxon>Bacteria</taxon>
        <taxon>Pseudomonadati</taxon>
        <taxon>Pseudomonadota</taxon>
        <taxon>Gammaproteobacteria</taxon>
        <taxon>Enterobacterales</taxon>
        <taxon>Enterobacteriaceae</taxon>
        <taxon>Escherichia</taxon>
    </lineage>
</organism>
<keyword id="KW-0963">Cytoplasm</keyword>
<keyword id="KW-0690">Ribosome biogenesis</keyword>
<sequence length="133" mass="15154">MAKEFGRPQRVAQEMQKEIALILQREIKDPRLGMMTTVSGVEMSRDLAYAKVYVTFLNDKDEDAVKAGIKALQEASGFIRSLLGKAMRLRIVPELTFFYDNSLVEGMRMSNLVTSVVKHDEERRVNPDDSKED</sequence>